<feature type="chain" id="PRO_0000205813" description="ADP-L-glycero-D-manno-heptose-6-epimerase">
    <location>
        <begin position="1"/>
        <end position="313"/>
    </location>
</feature>
<feature type="active site" description="Proton acceptor" evidence="1">
    <location>
        <position position="139"/>
    </location>
</feature>
<feature type="active site" description="Proton acceptor" evidence="1">
    <location>
        <position position="183"/>
    </location>
</feature>
<feature type="binding site" evidence="1">
    <location>
        <begin position="10"/>
        <end position="11"/>
    </location>
    <ligand>
        <name>NADP(+)</name>
        <dbReference type="ChEBI" id="CHEBI:58349"/>
    </ligand>
</feature>
<feature type="binding site" evidence="1">
    <location>
        <begin position="31"/>
        <end position="32"/>
    </location>
    <ligand>
        <name>NADP(+)</name>
        <dbReference type="ChEBI" id="CHEBI:58349"/>
    </ligand>
</feature>
<feature type="binding site" evidence="1">
    <location>
        <position position="38"/>
    </location>
    <ligand>
        <name>NADP(+)</name>
        <dbReference type="ChEBI" id="CHEBI:58349"/>
    </ligand>
</feature>
<feature type="binding site" evidence="1">
    <location>
        <position position="53"/>
    </location>
    <ligand>
        <name>NADP(+)</name>
        <dbReference type="ChEBI" id="CHEBI:58349"/>
    </ligand>
</feature>
<feature type="binding site" evidence="1">
    <location>
        <begin position="75"/>
        <end position="79"/>
    </location>
    <ligand>
        <name>NADP(+)</name>
        <dbReference type="ChEBI" id="CHEBI:58349"/>
    </ligand>
</feature>
<feature type="binding site" evidence="1">
    <location>
        <position position="92"/>
    </location>
    <ligand>
        <name>NADP(+)</name>
        <dbReference type="ChEBI" id="CHEBI:58349"/>
    </ligand>
</feature>
<feature type="binding site" evidence="1">
    <location>
        <position position="143"/>
    </location>
    <ligand>
        <name>NADP(+)</name>
        <dbReference type="ChEBI" id="CHEBI:58349"/>
    </ligand>
</feature>
<feature type="binding site" evidence="1">
    <location>
        <position position="174"/>
    </location>
    <ligand>
        <name>substrate</name>
    </ligand>
</feature>
<feature type="binding site" evidence="1">
    <location>
        <position position="175"/>
    </location>
    <ligand>
        <name>NADP(+)</name>
        <dbReference type="ChEBI" id="CHEBI:58349"/>
    </ligand>
</feature>
<feature type="binding site" evidence="1">
    <location>
        <position position="183"/>
    </location>
    <ligand>
        <name>NADP(+)</name>
        <dbReference type="ChEBI" id="CHEBI:58349"/>
    </ligand>
</feature>
<feature type="binding site" evidence="1">
    <location>
        <position position="185"/>
    </location>
    <ligand>
        <name>substrate</name>
    </ligand>
</feature>
<feature type="binding site" evidence="1">
    <location>
        <position position="192"/>
    </location>
    <ligand>
        <name>substrate</name>
    </ligand>
</feature>
<feature type="binding site" evidence="1">
    <location>
        <begin position="206"/>
        <end position="209"/>
    </location>
    <ligand>
        <name>substrate</name>
    </ligand>
</feature>
<feature type="binding site" evidence="1">
    <location>
        <position position="214"/>
    </location>
    <ligand>
        <name>substrate</name>
    </ligand>
</feature>
<feature type="binding site" evidence="1">
    <location>
        <position position="277"/>
    </location>
    <ligand>
        <name>substrate</name>
    </ligand>
</feature>
<comment type="function">
    <text evidence="1">Catalyzes the interconversion between ADP-D-glycero-beta-D-manno-heptose and ADP-L-glycero-beta-D-manno-heptose via an epimerization at carbon 6 of the heptose.</text>
</comment>
<comment type="catalytic activity">
    <reaction evidence="1">
        <text>ADP-D-glycero-beta-D-manno-heptose = ADP-L-glycero-beta-D-manno-heptose</text>
        <dbReference type="Rhea" id="RHEA:17577"/>
        <dbReference type="ChEBI" id="CHEBI:59967"/>
        <dbReference type="ChEBI" id="CHEBI:61506"/>
        <dbReference type="EC" id="5.1.3.20"/>
    </reaction>
</comment>
<comment type="cofactor">
    <cofactor evidence="1">
        <name>NADP(+)</name>
        <dbReference type="ChEBI" id="CHEBI:58349"/>
    </cofactor>
    <text evidence="1">Binds 1 NADP(+) per subunit.</text>
</comment>
<comment type="pathway">
    <text evidence="1">Nucleotide-sugar biosynthesis; ADP-L-glycero-beta-D-manno-heptose biosynthesis; ADP-L-glycero-beta-D-manno-heptose from D-glycero-beta-D-manno-heptose 7-phosphate: step 4/4.</text>
</comment>
<comment type="pathway">
    <text>Bacterial outer membrane biogenesis; LPS core biosynthesis.</text>
</comment>
<comment type="subunit">
    <text evidence="1">Homopentamer.</text>
</comment>
<comment type="domain">
    <text evidence="1">Contains a large N-terminal NADP-binding domain, and a smaller C-terminal substrate-binding domain.</text>
</comment>
<comment type="similarity">
    <text evidence="1">Belongs to the NAD(P)-dependent epimerase/dehydratase family. HldD subfamily.</text>
</comment>
<reference key="1">
    <citation type="submission" date="2002-12" db="EMBL/GenBank/DDBJ databases">
        <title>Complete genome sequence of Vibrio vulnificus CMCP6.</title>
        <authorList>
            <person name="Rhee J.H."/>
            <person name="Kim S.Y."/>
            <person name="Chung S.S."/>
            <person name="Kim J.J."/>
            <person name="Moon Y.H."/>
            <person name="Jeong H."/>
            <person name="Choy H.E."/>
        </authorList>
    </citation>
    <scope>NUCLEOTIDE SEQUENCE [LARGE SCALE GENOMIC DNA]</scope>
    <source>
        <strain>CMCP6</strain>
    </source>
</reference>
<sequence length="313" mass="35165">MIIVTGGAGMIGSNIVKALNEIGINDILVVDNLKNGRKFKNLVDLDITDYMDRDDFLTQIMAGDNFGPIEAVFHEGACSATTEWDGKYMMLNNYEYSKELLHYCLEREIPFLYASSAATYGETTVFKEEREYEGALNVYGYSKQQFDNYVRRLWQDAEEHGETLSQITGFRYFNVYGPREQHKGSMASVAFHLNNQILAGENPKLFAGSEQFKRDFIYVGDVCKVNLWFMQNGVSGIFNCGTGNAESFEEVAKAVIKHHGKGEIETIPFPEHLKGAYQEFTQADLTKLRAAGCDVEFKTVAEGVAEYMAIVNG</sequence>
<proteinExistence type="inferred from homology"/>
<name>HLDD_VIBVU</name>
<dbReference type="EC" id="5.1.3.20" evidence="1"/>
<dbReference type="EMBL" id="AE016795">
    <property type="protein sequence ID" value="AAO09300.1"/>
    <property type="molecule type" value="Genomic_DNA"/>
</dbReference>
<dbReference type="SMR" id="Q8DE09"/>
<dbReference type="KEGG" id="vvu:VV1_0796"/>
<dbReference type="HOGENOM" id="CLU_007383_1_3_6"/>
<dbReference type="UniPathway" id="UPA00356">
    <property type="reaction ID" value="UER00440"/>
</dbReference>
<dbReference type="UniPathway" id="UPA00958"/>
<dbReference type="Proteomes" id="UP000002275">
    <property type="component" value="Chromosome 1"/>
</dbReference>
<dbReference type="GO" id="GO:0008712">
    <property type="term" value="F:ADP-glyceromanno-heptose 6-epimerase activity"/>
    <property type="evidence" value="ECO:0007669"/>
    <property type="project" value="UniProtKB-UniRule"/>
</dbReference>
<dbReference type="GO" id="GO:0050661">
    <property type="term" value="F:NADP binding"/>
    <property type="evidence" value="ECO:0007669"/>
    <property type="project" value="InterPro"/>
</dbReference>
<dbReference type="GO" id="GO:0097171">
    <property type="term" value="P:ADP-L-glycero-beta-D-manno-heptose biosynthetic process"/>
    <property type="evidence" value="ECO:0007669"/>
    <property type="project" value="UniProtKB-UniPathway"/>
</dbReference>
<dbReference type="GO" id="GO:0009244">
    <property type="term" value="P:lipopolysaccharide core region biosynthetic process"/>
    <property type="evidence" value="ECO:0007669"/>
    <property type="project" value="UniProtKB-UniPathway"/>
</dbReference>
<dbReference type="CDD" id="cd05248">
    <property type="entry name" value="ADP_GME_SDR_e"/>
    <property type="match status" value="1"/>
</dbReference>
<dbReference type="Gene3D" id="3.40.50.720">
    <property type="entry name" value="NAD(P)-binding Rossmann-like Domain"/>
    <property type="match status" value="1"/>
</dbReference>
<dbReference type="Gene3D" id="3.90.25.10">
    <property type="entry name" value="UDP-galactose 4-epimerase, domain 1"/>
    <property type="match status" value="1"/>
</dbReference>
<dbReference type="HAMAP" id="MF_01601">
    <property type="entry name" value="Heptose_epimerase"/>
    <property type="match status" value="1"/>
</dbReference>
<dbReference type="InterPro" id="IPR001509">
    <property type="entry name" value="Epimerase_deHydtase"/>
</dbReference>
<dbReference type="InterPro" id="IPR011912">
    <property type="entry name" value="Heptose_epim"/>
</dbReference>
<dbReference type="InterPro" id="IPR036291">
    <property type="entry name" value="NAD(P)-bd_dom_sf"/>
</dbReference>
<dbReference type="NCBIfam" id="TIGR02197">
    <property type="entry name" value="heptose_epim"/>
    <property type="match status" value="1"/>
</dbReference>
<dbReference type="NCBIfam" id="NF008360">
    <property type="entry name" value="PRK11150.1"/>
    <property type="match status" value="1"/>
</dbReference>
<dbReference type="PANTHER" id="PTHR43103:SF3">
    <property type="entry name" value="ADP-L-GLYCERO-D-MANNO-HEPTOSE-6-EPIMERASE"/>
    <property type="match status" value="1"/>
</dbReference>
<dbReference type="PANTHER" id="PTHR43103">
    <property type="entry name" value="NUCLEOSIDE-DIPHOSPHATE-SUGAR EPIMERASE"/>
    <property type="match status" value="1"/>
</dbReference>
<dbReference type="Pfam" id="PF01370">
    <property type="entry name" value="Epimerase"/>
    <property type="match status" value="1"/>
</dbReference>
<dbReference type="SUPFAM" id="SSF51735">
    <property type="entry name" value="NAD(P)-binding Rossmann-fold domains"/>
    <property type="match status" value="1"/>
</dbReference>
<protein>
    <recommendedName>
        <fullName evidence="1">ADP-L-glycero-D-manno-heptose-6-epimerase</fullName>
        <ecNumber evidence="1">5.1.3.20</ecNumber>
    </recommendedName>
    <alternativeName>
        <fullName evidence="1">ADP-L-glycero-beta-D-manno-heptose-6-epimerase</fullName>
        <shortName evidence="1">ADP-glyceromanno-heptose 6-epimerase</shortName>
        <shortName evidence="1">ADP-hep 6-epimerase</shortName>
        <shortName evidence="1">AGME</shortName>
    </alternativeName>
</protein>
<evidence type="ECO:0000255" key="1">
    <source>
        <dbReference type="HAMAP-Rule" id="MF_01601"/>
    </source>
</evidence>
<organism>
    <name type="scientific">Vibrio vulnificus (strain CMCP6)</name>
    <dbReference type="NCBI Taxonomy" id="216895"/>
    <lineage>
        <taxon>Bacteria</taxon>
        <taxon>Pseudomonadati</taxon>
        <taxon>Pseudomonadota</taxon>
        <taxon>Gammaproteobacteria</taxon>
        <taxon>Vibrionales</taxon>
        <taxon>Vibrionaceae</taxon>
        <taxon>Vibrio</taxon>
    </lineage>
</organism>
<gene>
    <name evidence="1" type="primary">hldD</name>
    <name type="ordered locus">VV1_0796</name>
</gene>
<keyword id="KW-0119">Carbohydrate metabolism</keyword>
<keyword id="KW-0413">Isomerase</keyword>
<keyword id="KW-0521">NADP</keyword>
<accession>Q8DE09</accession>